<accession>Q12EE8</accession>
<dbReference type="EC" id="3.1.-.-" evidence="1"/>
<dbReference type="EMBL" id="CP000316">
    <property type="protein sequence ID" value="ABE43094.1"/>
    <property type="molecule type" value="Genomic_DNA"/>
</dbReference>
<dbReference type="RefSeq" id="WP_011482095.1">
    <property type="nucleotide sequence ID" value="NC_007948.1"/>
</dbReference>
<dbReference type="SMR" id="Q12EE8"/>
<dbReference type="STRING" id="296591.Bpro_1143"/>
<dbReference type="KEGG" id="pol:Bpro_1143"/>
<dbReference type="eggNOG" id="COG0816">
    <property type="taxonomic scope" value="Bacteria"/>
</dbReference>
<dbReference type="HOGENOM" id="CLU_098240_3_2_4"/>
<dbReference type="OrthoDB" id="9796140at2"/>
<dbReference type="Proteomes" id="UP000001983">
    <property type="component" value="Chromosome"/>
</dbReference>
<dbReference type="GO" id="GO:0005829">
    <property type="term" value="C:cytosol"/>
    <property type="evidence" value="ECO:0007669"/>
    <property type="project" value="TreeGrafter"/>
</dbReference>
<dbReference type="GO" id="GO:0004518">
    <property type="term" value="F:nuclease activity"/>
    <property type="evidence" value="ECO:0007669"/>
    <property type="project" value="UniProtKB-KW"/>
</dbReference>
<dbReference type="GO" id="GO:0000967">
    <property type="term" value="P:rRNA 5'-end processing"/>
    <property type="evidence" value="ECO:0007669"/>
    <property type="project" value="UniProtKB-UniRule"/>
</dbReference>
<dbReference type="CDD" id="cd16964">
    <property type="entry name" value="YqgF"/>
    <property type="match status" value="1"/>
</dbReference>
<dbReference type="Gene3D" id="3.30.420.140">
    <property type="entry name" value="YqgF/RNase H-like domain"/>
    <property type="match status" value="1"/>
</dbReference>
<dbReference type="HAMAP" id="MF_00651">
    <property type="entry name" value="Nuclease_YqgF"/>
    <property type="match status" value="1"/>
</dbReference>
<dbReference type="InterPro" id="IPR012337">
    <property type="entry name" value="RNaseH-like_sf"/>
</dbReference>
<dbReference type="InterPro" id="IPR005227">
    <property type="entry name" value="YqgF"/>
</dbReference>
<dbReference type="InterPro" id="IPR006641">
    <property type="entry name" value="YqgF/RNaseH-like_dom"/>
</dbReference>
<dbReference type="InterPro" id="IPR037027">
    <property type="entry name" value="YqgF/RNaseH-like_dom_sf"/>
</dbReference>
<dbReference type="NCBIfam" id="TIGR00250">
    <property type="entry name" value="RNAse_H_YqgF"/>
    <property type="match status" value="1"/>
</dbReference>
<dbReference type="PANTHER" id="PTHR33317">
    <property type="entry name" value="POLYNUCLEOTIDYL TRANSFERASE, RIBONUCLEASE H-LIKE SUPERFAMILY PROTEIN"/>
    <property type="match status" value="1"/>
</dbReference>
<dbReference type="PANTHER" id="PTHR33317:SF4">
    <property type="entry name" value="POLYNUCLEOTIDYL TRANSFERASE, RIBONUCLEASE H-LIKE SUPERFAMILY PROTEIN"/>
    <property type="match status" value="1"/>
</dbReference>
<dbReference type="Pfam" id="PF03652">
    <property type="entry name" value="RuvX"/>
    <property type="match status" value="1"/>
</dbReference>
<dbReference type="SMART" id="SM00732">
    <property type="entry name" value="YqgFc"/>
    <property type="match status" value="1"/>
</dbReference>
<dbReference type="SUPFAM" id="SSF53098">
    <property type="entry name" value="Ribonuclease H-like"/>
    <property type="match status" value="1"/>
</dbReference>
<reference key="1">
    <citation type="journal article" date="2008" name="Appl. Environ. Microbiol.">
        <title>The genome of Polaromonas sp. strain JS666: insights into the evolution of a hydrocarbon- and xenobiotic-degrading bacterium, and features of relevance to biotechnology.</title>
        <authorList>
            <person name="Mattes T.E."/>
            <person name="Alexander A.K."/>
            <person name="Richardson P.M."/>
            <person name="Munk A.C."/>
            <person name="Han C.S."/>
            <person name="Stothard P."/>
            <person name="Coleman N.V."/>
        </authorList>
    </citation>
    <scope>NUCLEOTIDE SEQUENCE [LARGE SCALE GENOMIC DNA]</scope>
    <source>
        <strain>JS666 / ATCC BAA-500</strain>
    </source>
</reference>
<organism>
    <name type="scientific">Polaromonas sp. (strain JS666 / ATCC BAA-500)</name>
    <dbReference type="NCBI Taxonomy" id="296591"/>
    <lineage>
        <taxon>Bacteria</taxon>
        <taxon>Pseudomonadati</taxon>
        <taxon>Pseudomonadota</taxon>
        <taxon>Betaproteobacteria</taxon>
        <taxon>Burkholderiales</taxon>
        <taxon>Comamonadaceae</taxon>
        <taxon>Polaromonas</taxon>
    </lineage>
</organism>
<keyword id="KW-0963">Cytoplasm</keyword>
<keyword id="KW-0378">Hydrolase</keyword>
<keyword id="KW-0540">Nuclease</keyword>
<keyword id="KW-1185">Reference proteome</keyword>
<keyword id="KW-0690">Ribosome biogenesis</keyword>
<name>YQGF_POLSJ</name>
<proteinExistence type="inferred from homology"/>
<gene>
    <name type="ordered locus">Bpro_1143</name>
</gene>
<feature type="chain" id="PRO_0000257561" description="Putative pre-16S rRNA nuclease">
    <location>
        <begin position="1"/>
        <end position="138"/>
    </location>
</feature>
<sequence length="138" mass="14878">MSLAAVPHLTAGLQTFLAFDFGLQRTGVATGNVLTRTATPQATIAATGDARLKAIELRIREWQPDALVVGIPFHPDGASHENTRRAQKFSRQLRARFGLKVFEVDERYSTTEALAGGAADADAASACIILEQFLRSLP</sequence>
<comment type="function">
    <text evidence="1">Could be a nuclease involved in processing of the 5'-end of pre-16S rRNA.</text>
</comment>
<comment type="subcellular location">
    <subcellularLocation>
        <location evidence="1">Cytoplasm</location>
    </subcellularLocation>
</comment>
<comment type="similarity">
    <text evidence="1">Belongs to the YqgF nuclease family.</text>
</comment>
<protein>
    <recommendedName>
        <fullName evidence="1">Putative pre-16S rRNA nuclease</fullName>
        <ecNumber evidence="1">3.1.-.-</ecNumber>
    </recommendedName>
</protein>
<evidence type="ECO:0000255" key="1">
    <source>
        <dbReference type="HAMAP-Rule" id="MF_00651"/>
    </source>
</evidence>